<feature type="chain" id="PRO_0000417527" description="Meiosis regulator and mRNA stability factor 1">
    <location>
        <begin position="1"/>
        <end position="1742"/>
    </location>
</feature>
<feature type="domain" description="NYN">
    <location>
        <begin position="351"/>
        <end position="488"/>
    </location>
</feature>
<feature type="domain" description="RRM" evidence="4">
    <location>
        <begin position="788"/>
        <end position="867"/>
    </location>
</feature>
<feature type="domain" description="HTH OST-type 1" evidence="5">
    <location>
        <begin position="872"/>
        <end position="946"/>
    </location>
</feature>
<feature type="domain" description="HTH OST-type 2" evidence="5">
    <location>
        <begin position="1000"/>
        <end position="1077"/>
    </location>
</feature>
<feature type="domain" description="HTH OST-type 3" evidence="5">
    <location>
        <begin position="1097"/>
        <end position="1171"/>
    </location>
</feature>
<feature type="domain" description="HTH OST-type 4" evidence="5">
    <location>
        <begin position="1173"/>
        <end position="1247"/>
    </location>
</feature>
<feature type="domain" description="HTH OST-type 5" evidence="5">
    <location>
        <begin position="1257"/>
        <end position="1332"/>
    </location>
</feature>
<feature type="domain" description="HTH OST-type 6" evidence="5">
    <location>
        <begin position="1333"/>
        <end position="1408"/>
    </location>
</feature>
<feature type="domain" description="HTH OST-type 7" evidence="5">
    <location>
        <begin position="1409"/>
        <end position="1484"/>
    </location>
</feature>
<feature type="domain" description="HTH OST-type 8" evidence="5">
    <location>
        <begin position="1486"/>
        <end position="1560"/>
    </location>
</feature>
<feature type="region of interest" description="Disordered" evidence="6">
    <location>
        <begin position="620"/>
        <end position="642"/>
    </location>
</feature>
<feature type="region of interest" description="Disordered" evidence="6">
    <location>
        <begin position="655"/>
        <end position="721"/>
    </location>
</feature>
<feature type="region of interest" description="Disordered" evidence="6">
    <location>
        <begin position="1678"/>
        <end position="1729"/>
    </location>
</feature>
<feature type="compositionally biased region" description="Polar residues" evidence="6">
    <location>
        <begin position="631"/>
        <end position="642"/>
    </location>
</feature>
<feature type="compositionally biased region" description="Low complexity" evidence="6">
    <location>
        <begin position="673"/>
        <end position="689"/>
    </location>
</feature>
<feature type="compositionally biased region" description="Low complexity" evidence="6">
    <location>
        <begin position="1703"/>
        <end position="1712"/>
    </location>
</feature>
<feature type="modified residue" description="Phosphoserine" evidence="3">
    <location>
        <position position="65"/>
    </location>
</feature>
<feature type="modified residue" description="Phosphotyrosine" evidence="2">
    <location>
        <position position="696"/>
    </location>
</feature>
<feature type="modified residue" description="Phosphoserine" evidence="3">
    <location>
        <position position="757"/>
    </location>
</feature>
<feature type="modified residue" description="Phosphoserine" evidence="3">
    <location>
        <position position="1089"/>
    </location>
</feature>
<feature type="modified residue" description="Phosphoserine" evidence="3">
    <location>
        <position position="1091"/>
    </location>
</feature>
<feature type="modified residue" description="Phosphoserine" evidence="3">
    <location>
        <position position="1571"/>
    </location>
</feature>
<evidence type="ECO:0000250" key="1"/>
<evidence type="ECO:0000250" key="2">
    <source>
        <dbReference type="UniProtKB" id="Q8BJ34"/>
    </source>
</evidence>
<evidence type="ECO:0000250" key="3">
    <source>
        <dbReference type="UniProtKB" id="Q9Y4F3"/>
    </source>
</evidence>
<evidence type="ECO:0000255" key="4">
    <source>
        <dbReference type="PROSITE-ProRule" id="PRU00176"/>
    </source>
</evidence>
<evidence type="ECO:0000255" key="5">
    <source>
        <dbReference type="PROSITE-ProRule" id="PRU00975"/>
    </source>
</evidence>
<evidence type="ECO:0000256" key="6">
    <source>
        <dbReference type="SAM" id="MobiDB-lite"/>
    </source>
</evidence>
<accession>E1BP74</accession>
<keyword id="KW-0221">Differentiation</keyword>
<keyword id="KW-0469">Meiosis</keyword>
<keyword id="KW-0896">Oogenesis</keyword>
<keyword id="KW-0576">Peroxisome</keyword>
<keyword id="KW-0597">Phosphoprotein</keyword>
<keyword id="KW-1185">Reference proteome</keyword>
<keyword id="KW-0677">Repeat</keyword>
<keyword id="KW-0694">RNA-binding</keyword>
<name>MARF1_BOVIN</name>
<protein>
    <recommendedName>
        <fullName evidence="3">Meiosis regulator and mRNA stability factor 1</fullName>
    </recommendedName>
    <alternativeName>
        <fullName evidence="3">Limkain-b1</fullName>
    </alternativeName>
    <alternativeName>
        <fullName evidence="3">Meiosis arrest female protein 1</fullName>
    </alternativeName>
</protein>
<proteinExistence type="inferred from homology"/>
<gene>
    <name evidence="3" type="primary">MARF1</name>
    <name type="synonym">LKAP</name>
</gene>
<sequence length="1742" mass="192127">MEGSGTENPCSTTVGWLQQDNDAKPWLWRFSNCFSRPQQTLPLSPQTKDYMENKKVAVELKDVPSPLHAGSKLFPAVPLPDIHSLQQPKVQLSTVPKVSCCAHCTNDPSTSPVRFGGGSGGGAGSLVPPGALLDSQSTRTITCQVGSGLAFQSAPPLQNASARNTLAGVASDFPSMCLESNLSSCKHLPCCGKLHFQSCRGNVHKLHQFPALQGCPSSAGYFPCSDFTSGAPGHVEEHVSQSELTPHLCTNSLHLNVVPPVCLKGSLYCEDCLSKPARNSIIDAAKVWPNIPPPNTQTAPVTVPLCNGCGTKGMGKETTLLLATSLGKAASKFGSPEVALAGQMLENLPPIGVFWDIENCSVPSGRSATAVVQRIREKFFKGHREAEFICVCDISKENKEVIQELNNCQVTVAHINATAKNAADDKLRQSLRRFANTHTAPATVVLVSTDVNFALELSDLRHRHGFHIILVHKNQASEALLHHANELIRFEEFISDLPPRLPLKMPCHTLLYVYNLPANKDGKSISNRLRRLSDNCGGKVLNITGCSAILRFINRDSAERALKRMENEDVFGNRIVVSFTPKSSELCETKSSNATADKVKSPKKLKNPKLCLIKDISESPSSAKAAPGKGSQANSGSATRNANVKSLQELCRLESKTGTRSSEPQQGHLRLGAPPHRSSSAAAPAPKAPGLAESVYKTNPKKESLGARSVTSSPVEKKEKEETLFQVSYPSAFSKLIASRQVSPLLTAQPWSSRNLSPNLLNRASPLAFNAAHSSVGADGPDPFAHGVDVQISNLDYRLSRKELQQLMQEAFSRHGKVKSVELSPHTDYQLKAVVQMENLQEAIGAVNSLHRYKIGSKKILVSLATGAANKSLSLLSAETMSILQDAPACCLPLFKFTDIYEKKFGHRLNVSDLYKLTDTVAIREQGNGRLVCLLPSSQARQSPLGSSQSHDGSSTNCSPIIFEELEYHEPVCRQHCPNKDFSEHEFDPDSYKIPFVILSLKTFAPQVHSLLQTHEGTVPLLSFPDCYAAEFGELEIVQENRGGGVPLEHLITCVPGVNIATAQNGVKVVKWIHNKPPPPNTDPWLLRSKSPVGNPQLIQFSREVIDLLKNQPSCVIPISNFIPSYHHHFAKQCRVSDYGYSKLIELLEAVPHVLQILGMGSKRLLTLTHRAQVKRFTQDLLKLLKSQASKQVIVKEFAQAYHWCFSKDWDVTEYGVCELIDIISEIPDTTICLSQQDSEAMICIPRRERTQDEIERTKQFSKDVVDLLRHQPHFRMPFNKFIPSYHHHFGRQCKLAYYGFTKLLELFEAIPDILQVLECGEEKILTLTEVERFKALAAQFVKLLRSQKDNCLMMTDLLKEYAKTFGYTFRLQDYDVSSVSALTQKLCHVVKVADMESGKQIQLINRKSLRALTAQLLVLLMSWEGTTHLSVDELKRHYESTHSTPLNPCEYGFMTLTELLKSLPYLVEDQVFTNDKTEECVKLTSLYLFAKNVRSLLHTYHYQQLFLHEFSMAYSKYVGETLQPKTYGFSSVEELLGAIPQVVWIKGHGHKRIVVLKNDMKSRVNSLGPSPASHETQPSAPERILEVPESPPASELRLGVGGDGPHPAEQELLRLTDDSPVDLLCAPVPSCLPSPQLRPDPVVLQAADLIWFEEHPQEPSEIMILNQEEKIEIPVPIRNENLPPDPSSPGVSAAVPAPPSPSSETPESLLSKDPTESPAKKQPKNRVKLAANFSFAPITKL</sequence>
<reference key="1">
    <citation type="journal article" date="2009" name="Genome Biol.">
        <title>A whole-genome assembly of the domestic cow, Bos taurus.</title>
        <authorList>
            <person name="Zimin A.V."/>
            <person name="Delcher A.L."/>
            <person name="Florea L."/>
            <person name="Kelley D.R."/>
            <person name="Schatz M.C."/>
            <person name="Puiu D."/>
            <person name="Hanrahan F."/>
            <person name="Pertea G."/>
            <person name="Van Tassell C.P."/>
            <person name="Sonstegard T.S."/>
            <person name="Marcais G."/>
            <person name="Roberts M."/>
            <person name="Subramanian P."/>
            <person name="Yorke J.A."/>
            <person name="Salzberg S.L."/>
        </authorList>
    </citation>
    <scope>NUCLEOTIDE SEQUENCE [LARGE SCALE GENOMIC DNA]</scope>
    <source>
        <strain>Hereford</strain>
    </source>
</reference>
<comment type="function">
    <text evidence="1">Essential regulator of oogenesis required for female meiotic progression to repress transposable elements and preventing their mobilization, which is essential for the germline integrity. Probably acts via some RNA metabolic process, equivalent to the piRNA system in males, which mediates the repression of transposable elements during meiosis by forming complexes composed of RNAs and governs the methylation and subsequent repression of transposons. Also required to protect from DNA double-strand breaks (By similarity).</text>
</comment>
<comment type="subunit">
    <text evidence="1">Interacts with LIMK2.</text>
</comment>
<comment type="subcellular location">
    <subcellularLocation>
        <location evidence="1">Peroxisome</location>
    </subcellularLocation>
</comment>
<organism>
    <name type="scientific">Bos taurus</name>
    <name type="common">Bovine</name>
    <dbReference type="NCBI Taxonomy" id="9913"/>
    <lineage>
        <taxon>Eukaryota</taxon>
        <taxon>Metazoa</taxon>
        <taxon>Chordata</taxon>
        <taxon>Craniata</taxon>
        <taxon>Vertebrata</taxon>
        <taxon>Euteleostomi</taxon>
        <taxon>Mammalia</taxon>
        <taxon>Eutheria</taxon>
        <taxon>Laurasiatheria</taxon>
        <taxon>Artiodactyla</taxon>
        <taxon>Ruminantia</taxon>
        <taxon>Pecora</taxon>
        <taxon>Bovidae</taxon>
        <taxon>Bovinae</taxon>
        <taxon>Bos</taxon>
    </lineage>
</organism>
<dbReference type="EMBL" id="DAAA02057550">
    <property type="status" value="NOT_ANNOTATED_CDS"/>
    <property type="molecule type" value="Genomic_DNA"/>
</dbReference>
<dbReference type="SMR" id="E1BP74"/>
<dbReference type="FunCoup" id="E1BP74">
    <property type="interactions" value="2360"/>
</dbReference>
<dbReference type="STRING" id="9913.ENSBTAP00000027175"/>
<dbReference type="PaxDb" id="9913-ENSBTAP00000027175"/>
<dbReference type="eggNOG" id="ENOG502QUYZ">
    <property type="taxonomic scope" value="Eukaryota"/>
</dbReference>
<dbReference type="HOGENOM" id="CLU_002701_0_0_1"/>
<dbReference type="InParanoid" id="E1BP74"/>
<dbReference type="OrthoDB" id="549353at2759"/>
<dbReference type="TreeFam" id="TF329117"/>
<dbReference type="Proteomes" id="UP000009136">
    <property type="component" value="Unplaced"/>
</dbReference>
<dbReference type="GO" id="GO:0005737">
    <property type="term" value="C:cytoplasm"/>
    <property type="evidence" value="ECO:0000318"/>
    <property type="project" value="GO_Central"/>
</dbReference>
<dbReference type="GO" id="GO:0005777">
    <property type="term" value="C:peroxisome"/>
    <property type="evidence" value="ECO:0007669"/>
    <property type="project" value="UniProtKB-SubCell"/>
</dbReference>
<dbReference type="GO" id="GO:1905762">
    <property type="term" value="F:CCR4-NOT complex binding"/>
    <property type="evidence" value="ECO:0000318"/>
    <property type="project" value="GO_Central"/>
</dbReference>
<dbReference type="GO" id="GO:0003723">
    <property type="term" value="F:RNA binding"/>
    <property type="evidence" value="ECO:0007669"/>
    <property type="project" value="UniProtKB-KW"/>
</dbReference>
<dbReference type="GO" id="GO:0004540">
    <property type="term" value="F:RNA nuclease activity"/>
    <property type="evidence" value="ECO:0007669"/>
    <property type="project" value="InterPro"/>
</dbReference>
<dbReference type="GO" id="GO:0007143">
    <property type="term" value="P:female meiotic nuclear division"/>
    <property type="evidence" value="ECO:0000250"/>
    <property type="project" value="UniProtKB"/>
</dbReference>
<dbReference type="GO" id="GO:0048477">
    <property type="term" value="P:oogenesis"/>
    <property type="evidence" value="ECO:0000250"/>
    <property type="project" value="UniProtKB"/>
</dbReference>
<dbReference type="GO" id="GO:0010468">
    <property type="term" value="P:regulation of gene expression"/>
    <property type="evidence" value="ECO:0000250"/>
    <property type="project" value="UniProtKB"/>
</dbReference>
<dbReference type="CDD" id="cd09977">
    <property type="entry name" value="LOTUS_1_Limkain_b1"/>
    <property type="match status" value="1"/>
</dbReference>
<dbReference type="CDD" id="cd09978">
    <property type="entry name" value="LOTUS_2_Limkain_b1"/>
    <property type="match status" value="1"/>
</dbReference>
<dbReference type="CDD" id="cd09979">
    <property type="entry name" value="LOTUS_3_Limkain_b1"/>
    <property type="match status" value="1"/>
</dbReference>
<dbReference type="CDD" id="cd09980">
    <property type="entry name" value="LOTUS_4_Limkain_b1"/>
    <property type="match status" value="1"/>
</dbReference>
<dbReference type="CDD" id="cd09981">
    <property type="entry name" value="LOTUS_5_Limkain_b1"/>
    <property type="match status" value="1"/>
</dbReference>
<dbReference type="CDD" id="cd09982">
    <property type="entry name" value="LOTUS_6_Limkain_b1"/>
    <property type="match status" value="1"/>
</dbReference>
<dbReference type="CDD" id="cd09983">
    <property type="entry name" value="LOTUS_7_Limkain_b1"/>
    <property type="match status" value="1"/>
</dbReference>
<dbReference type="CDD" id="cd09984">
    <property type="entry name" value="LOTUS_8_Limkain_b1"/>
    <property type="match status" value="1"/>
</dbReference>
<dbReference type="CDD" id="cd10910">
    <property type="entry name" value="PIN_limkain_b1_N_like"/>
    <property type="match status" value="1"/>
</dbReference>
<dbReference type="CDD" id="cd12255">
    <property type="entry name" value="RRM1_LKAP"/>
    <property type="match status" value="1"/>
</dbReference>
<dbReference type="CDD" id="cd12256">
    <property type="entry name" value="RRM2_LKAP"/>
    <property type="match status" value="1"/>
</dbReference>
<dbReference type="FunFam" id="3.30.420.610:FF:000001">
    <property type="entry name" value="Meiosis regulator and mRNA stability factor 1"/>
    <property type="match status" value="2"/>
</dbReference>
<dbReference type="FunFam" id="3.30.420.610:FF:000004">
    <property type="entry name" value="Meiosis regulator and mRNA stability factor 1"/>
    <property type="match status" value="1"/>
</dbReference>
<dbReference type="FunFam" id="3.30.70.330:FF:000171">
    <property type="entry name" value="Meiosis regulator and mRNA stability factor 1"/>
    <property type="match status" value="1"/>
</dbReference>
<dbReference type="FunFam" id="3.40.50.1010:FF:000008">
    <property type="entry name" value="Meiosis regulator and mRNA stability factor 1"/>
    <property type="match status" value="1"/>
</dbReference>
<dbReference type="Gene3D" id="3.30.70.330">
    <property type="match status" value="2"/>
</dbReference>
<dbReference type="Gene3D" id="3.40.50.1010">
    <property type="entry name" value="5'-nuclease"/>
    <property type="match status" value="1"/>
</dbReference>
<dbReference type="Gene3D" id="3.30.420.610">
    <property type="entry name" value="LOTUS domain-like"/>
    <property type="match status" value="6"/>
</dbReference>
<dbReference type="InterPro" id="IPR041966">
    <property type="entry name" value="LOTUS-like"/>
</dbReference>
<dbReference type="InterPro" id="IPR024768">
    <property type="entry name" value="Marf1"/>
</dbReference>
<dbReference type="InterPro" id="IPR045602">
    <property type="entry name" value="MARF1_LOTUS"/>
</dbReference>
<dbReference type="InterPro" id="IPR034189">
    <property type="entry name" value="MARF1_RRM1"/>
</dbReference>
<dbReference type="InterPro" id="IPR034191">
    <property type="entry name" value="MARF1_RRM2"/>
</dbReference>
<dbReference type="InterPro" id="IPR012677">
    <property type="entry name" value="Nucleotide-bd_a/b_plait_sf"/>
</dbReference>
<dbReference type="InterPro" id="IPR021139">
    <property type="entry name" value="NYN"/>
</dbReference>
<dbReference type="InterPro" id="IPR025605">
    <property type="entry name" value="OST-HTH/LOTUS_dom"/>
</dbReference>
<dbReference type="InterPro" id="IPR035979">
    <property type="entry name" value="RBD_domain_sf"/>
</dbReference>
<dbReference type="InterPro" id="IPR000504">
    <property type="entry name" value="RRM_dom"/>
</dbReference>
<dbReference type="PANTHER" id="PTHR14379">
    <property type="entry name" value="LIMKAIN B LKAP"/>
    <property type="match status" value="1"/>
</dbReference>
<dbReference type="PANTHER" id="PTHR14379:SF3">
    <property type="entry name" value="MEIOSIS REGULATOR AND MRNA STABILITY FACTOR 1"/>
    <property type="match status" value="1"/>
</dbReference>
<dbReference type="Pfam" id="PF19687">
    <property type="entry name" value="MARF1_LOTUS"/>
    <property type="match status" value="1"/>
</dbReference>
<dbReference type="Pfam" id="PF01936">
    <property type="entry name" value="NYN"/>
    <property type="match status" value="1"/>
</dbReference>
<dbReference type="Pfam" id="PF12872">
    <property type="entry name" value="OST-HTH"/>
    <property type="match status" value="5"/>
</dbReference>
<dbReference type="Pfam" id="PF00076">
    <property type="entry name" value="RRM_1"/>
    <property type="match status" value="1"/>
</dbReference>
<dbReference type="Pfam" id="PF11608">
    <property type="entry name" value="RRM_MARF1"/>
    <property type="match status" value="1"/>
</dbReference>
<dbReference type="SMART" id="SM00360">
    <property type="entry name" value="RRM"/>
    <property type="match status" value="2"/>
</dbReference>
<dbReference type="SUPFAM" id="SSF54928">
    <property type="entry name" value="RNA-binding domain, RBD"/>
    <property type="match status" value="2"/>
</dbReference>
<dbReference type="PROSITE" id="PS51644">
    <property type="entry name" value="HTH_OST"/>
    <property type="match status" value="8"/>
</dbReference>
<dbReference type="PROSITE" id="PS50102">
    <property type="entry name" value="RRM"/>
    <property type="match status" value="2"/>
</dbReference>